<comment type="function">
    <text>Component of the pheromone signal transduction pathway. It mediates pheromone signals acting between STE20 and STE11. It is absolutely required for pheromone-induced transcription of FUS1. May play a role in cell-cycle arrest in response to pheromone.</text>
</comment>
<comment type="interaction">
    <interactant intactId="EBI-18373">
        <id>P32917</id>
    </interactant>
    <interactant intactId="EBI-7179">
        <id>P11710</id>
        <label>FUS1</label>
    </interactant>
    <organismsDiffer>false</organismsDiffer>
    <experiments>2</experiments>
</comment>
<comment type="interaction">
    <interactant intactId="EBI-18373">
        <id>P32917</id>
    </interactant>
    <interactant intactId="EBI-7193">
        <id>P16892</id>
        <label>FUS3</label>
    </interactant>
    <organismsDiffer>false</organismsDiffer>
    <experiments>11</experiments>
</comment>
<comment type="interaction">
    <interactant intactId="EBI-18373">
        <id>P32917</id>
    </interactant>
    <interactant intactId="EBI-18259">
        <id>P23561</id>
        <label>STE11</label>
    </interactant>
    <organismsDiffer>false</organismsDiffer>
    <experiments>8</experiments>
</comment>
<comment type="interaction">
    <interactant intactId="EBI-18373">
        <id>P32917</id>
    </interactant>
    <interactant intactId="EBI-7390">
        <id>P18851</id>
        <label>STE4</label>
    </interactant>
    <organismsDiffer>false</organismsDiffer>
    <experiments>3</experiments>
</comment>
<comment type="interaction">
    <interactant intactId="EBI-18373">
        <id>P32917</id>
    </interactant>
    <interactant intactId="EBI-18389">
        <id>P06784</id>
        <label>STE7</label>
    </interactant>
    <organismsDiffer>false</organismsDiffer>
    <experiments>9</experiments>
</comment>
<comment type="interaction">
    <interactant intactId="EBI-18373">
        <id>P32917</id>
    </interactant>
    <interactant intactId="EBI-8783845">
        <id>Q6FPF2</id>
        <label>CAGL0J04290g</label>
    </interactant>
    <organismsDiffer>true</organismsDiffer>
    <experiments>2</experiments>
</comment>
<comment type="interaction">
    <interactant intactId="EBI-18373">
        <id>P32917</id>
    </interactant>
    <interactant intactId="EBI-8783371">
        <id>Q5A1D3</id>
        <label>CEK1</label>
    </interactant>
    <organismsDiffer>true</organismsDiffer>
    <experiments>2</experiments>
</comment>
<comment type="interaction">
    <interactant intactId="EBI-18373">
        <id>P32917</id>
    </interactant>
    <interactant intactId="EBI-8785667">
        <id>Q6CNR3</id>
        <label>KLLA0_E10539g</label>
    </interactant>
    <organismsDiffer>true</organismsDiffer>
    <experiments>2</experiments>
</comment>
<comment type="interaction">
    <interactant intactId="EBI-18373">
        <id>P32917</id>
    </interactant>
    <interactant intactId="EBI-8783425">
        <id>C8V7D1</id>
        <label>mpkB</label>
    </interactant>
    <organismsDiffer>true</organismsDiffer>
    <experiments>2</experiments>
</comment>
<comment type="subcellular location">
    <subcellularLocation>
        <location>Cytoplasm</location>
    </subcellularLocation>
</comment>
<comment type="PTM">
    <text>May be regulated at the phosphorylation level, and by the mating type of the cell and depends on an intact pheromone-response pathway.</text>
</comment>
<comment type="miscellaneous">
    <text evidence="2">Present with 1900 molecules/cell in log phase SD medium.</text>
</comment>
<comment type="similarity">
    <text evidence="3">To yeast FAR1.</text>
</comment>
<organism>
    <name type="scientific">Saccharomyces cerevisiae (strain ATCC 204508 / S288c)</name>
    <name type="common">Baker's yeast</name>
    <dbReference type="NCBI Taxonomy" id="559292"/>
    <lineage>
        <taxon>Eukaryota</taxon>
        <taxon>Fungi</taxon>
        <taxon>Dikarya</taxon>
        <taxon>Ascomycota</taxon>
        <taxon>Saccharomycotina</taxon>
        <taxon>Saccharomycetes</taxon>
        <taxon>Saccharomycetales</taxon>
        <taxon>Saccharomycetaceae</taxon>
        <taxon>Saccharomyces</taxon>
    </lineage>
</organism>
<name>STE5_YEAST</name>
<keyword id="KW-0002">3D-structure</keyword>
<keyword id="KW-0963">Cytoplasm</keyword>
<keyword id="KW-0589">Pheromone response</keyword>
<keyword id="KW-0597">Phosphoprotein</keyword>
<keyword id="KW-1185">Reference proteome</keyword>
<evidence type="ECO:0000256" key="1">
    <source>
        <dbReference type="SAM" id="MobiDB-lite"/>
    </source>
</evidence>
<evidence type="ECO:0000269" key="2">
    <source>
    </source>
</evidence>
<evidence type="ECO:0000305" key="3"/>
<evidence type="ECO:0007744" key="4">
    <source>
    </source>
</evidence>
<evidence type="ECO:0007829" key="5">
    <source>
        <dbReference type="PDB" id="2KGN"/>
    </source>
</evidence>
<evidence type="ECO:0007829" key="6">
    <source>
        <dbReference type="PDB" id="3FZE"/>
    </source>
</evidence>
<evidence type="ECO:0007829" key="7">
    <source>
        <dbReference type="PDB" id="4F2H"/>
    </source>
</evidence>
<feature type="chain" id="PRO_0000072266" description="Protein STE5">
    <location>
        <begin position="1"/>
        <end position="917"/>
    </location>
</feature>
<feature type="region of interest" description="Disordered" evidence="1">
    <location>
        <begin position="1"/>
        <end position="25"/>
    </location>
</feature>
<feature type="region of interest" description="Disordered" evidence="1">
    <location>
        <begin position="58"/>
        <end position="151"/>
    </location>
</feature>
<feature type="region of interest" description="Disordered" evidence="1">
    <location>
        <begin position="778"/>
        <end position="821"/>
    </location>
</feature>
<feature type="compositionally biased region" description="Polar residues" evidence="1">
    <location>
        <begin position="16"/>
        <end position="25"/>
    </location>
</feature>
<feature type="compositionally biased region" description="Low complexity" evidence="1">
    <location>
        <begin position="69"/>
        <end position="84"/>
    </location>
</feature>
<feature type="compositionally biased region" description="Polar residues" evidence="1">
    <location>
        <begin position="85"/>
        <end position="110"/>
    </location>
</feature>
<feature type="compositionally biased region" description="Polar residues" evidence="1">
    <location>
        <begin position="118"/>
        <end position="138"/>
    </location>
</feature>
<feature type="compositionally biased region" description="Acidic residues" evidence="1">
    <location>
        <begin position="778"/>
        <end position="794"/>
    </location>
</feature>
<feature type="compositionally biased region" description="Polar residues" evidence="1">
    <location>
        <begin position="799"/>
        <end position="821"/>
    </location>
</feature>
<feature type="modified residue" description="Phosphoserine" evidence="4">
    <location>
        <position position="329"/>
    </location>
</feature>
<feature type="sequence conflict" description="In Ref. 2; AAA35108." evidence="3" ref="2">
    <original>LG</original>
    <variation>W</variation>
    <location>
        <begin position="331"/>
        <end position="332"/>
    </location>
</feature>
<feature type="sequence conflict" description="In Ref. 2; AAA35108." evidence="3" ref="2">
    <original>NSI</original>
    <variation>TLS</variation>
    <location>
        <begin position="341"/>
        <end position="343"/>
    </location>
</feature>
<feature type="sequence conflict" description="In Ref. 1; BAA02301." evidence="3" ref="1">
    <original>A</original>
    <variation>R</variation>
    <location>
        <position position="821"/>
    </location>
</feature>
<feature type="helix" evidence="5">
    <location>
        <begin position="45"/>
        <end position="48"/>
    </location>
</feature>
<feature type="helix" evidence="5">
    <location>
        <begin position="49"/>
        <end position="51"/>
    </location>
</feature>
<feature type="turn" evidence="5">
    <location>
        <begin position="52"/>
        <end position="54"/>
    </location>
</feature>
<feature type="helix" evidence="5">
    <location>
        <begin position="55"/>
        <end position="58"/>
    </location>
</feature>
<feature type="helix" evidence="5">
    <location>
        <begin position="59"/>
        <end position="63"/>
    </location>
</feature>
<feature type="turn" evidence="5">
    <location>
        <begin position="64"/>
        <end position="66"/>
    </location>
</feature>
<feature type="helix" evidence="6">
    <location>
        <begin position="593"/>
        <end position="604"/>
    </location>
</feature>
<feature type="strand" evidence="6">
    <location>
        <begin position="608"/>
        <end position="616"/>
    </location>
</feature>
<feature type="helix" evidence="6">
    <location>
        <begin position="618"/>
        <end position="620"/>
    </location>
</feature>
<feature type="strand" evidence="7">
    <location>
        <begin position="622"/>
        <end position="624"/>
    </location>
</feature>
<feature type="helix" evidence="6">
    <location>
        <begin position="625"/>
        <end position="640"/>
    </location>
</feature>
<feature type="strand" evidence="6">
    <location>
        <begin position="645"/>
        <end position="650"/>
    </location>
</feature>
<feature type="strand" evidence="6">
    <location>
        <begin position="653"/>
        <end position="660"/>
    </location>
</feature>
<feature type="helix" evidence="6">
    <location>
        <begin position="661"/>
        <end position="664"/>
    </location>
</feature>
<feature type="helix" evidence="6">
    <location>
        <begin position="668"/>
        <end position="672"/>
    </location>
</feature>
<feature type="helix" evidence="6">
    <location>
        <begin position="673"/>
        <end position="676"/>
    </location>
</feature>
<feature type="helix" evidence="6">
    <location>
        <begin position="685"/>
        <end position="692"/>
    </location>
</feature>
<feature type="strand" evidence="6">
    <location>
        <begin position="701"/>
        <end position="707"/>
    </location>
</feature>
<feature type="turn" evidence="6">
    <location>
        <begin position="713"/>
        <end position="715"/>
    </location>
</feature>
<feature type="helix" evidence="6">
    <location>
        <begin position="717"/>
        <end position="719"/>
    </location>
</feature>
<feature type="helix" evidence="6">
    <location>
        <begin position="723"/>
        <end position="725"/>
    </location>
</feature>
<feature type="strand" evidence="6">
    <location>
        <begin position="735"/>
        <end position="741"/>
    </location>
</feature>
<feature type="turn" evidence="7">
    <location>
        <begin position="748"/>
        <end position="750"/>
    </location>
</feature>
<feature type="strand" evidence="6">
    <location>
        <begin position="755"/>
        <end position="758"/>
    </location>
</feature>
<feature type="helix" evidence="6">
    <location>
        <begin position="760"/>
        <end position="770"/>
    </location>
</feature>
<accession>P32917</accession>
<accession>D6VS89</accession>
<dbReference type="EMBL" id="D12917">
    <property type="protein sequence ID" value="BAA02301.1"/>
    <property type="molecule type" value="Genomic_DNA"/>
</dbReference>
<dbReference type="EMBL" id="L01620">
    <property type="protein sequence ID" value="AAA35108.1"/>
    <property type="molecule type" value="Genomic_DNA"/>
</dbReference>
<dbReference type="EMBL" id="L23856">
    <property type="protein sequence ID" value="AAA35115.1"/>
    <property type="molecule type" value="Genomic_DNA"/>
</dbReference>
<dbReference type="EMBL" id="L07865">
    <property type="protein sequence ID" value="AAA16896.1"/>
    <property type="molecule type" value="Unassigned_DNA"/>
</dbReference>
<dbReference type="EMBL" id="Z47746">
    <property type="protein sequence ID" value="CAA87679.1"/>
    <property type="molecule type" value="Genomic_DNA"/>
</dbReference>
<dbReference type="EMBL" id="BK006938">
    <property type="protein sequence ID" value="DAA11949.1"/>
    <property type="molecule type" value="Genomic_DNA"/>
</dbReference>
<dbReference type="PIR" id="S51254">
    <property type="entry name" value="S51254"/>
</dbReference>
<dbReference type="RefSeq" id="NP_010388.1">
    <property type="nucleotide sequence ID" value="NM_001180411.1"/>
</dbReference>
<dbReference type="PDB" id="2KGN">
    <property type="method" value="NMR"/>
    <property type="chains" value="A=44-67"/>
</dbReference>
<dbReference type="PDB" id="2L4U">
    <property type="method" value="NMR"/>
    <property type="chains" value="A=44-67"/>
</dbReference>
<dbReference type="PDB" id="3FZE">
    <property type="method" value="X-ray"/>
    <property type="resolution" value="1.60 A"/>
    <property type="chains" value="A=593-786"/>
</dbReference>
<dbReference type="PDB" id="4F2H">
    <property type="method" value="X-ray"/>
    <property type="resolution" value="3.19 A"/>
    <property type="chains" value="A=583-787"/>
</dbReference>
<dbReference type="PDBsum" id="2KGN"/>
<dbReference type="PDBsum" id="2L4U"/>
<dbReference type="PDBsum" id="3FZE"/>
<dbReference type="PDBsum" id="4F2H"/>
<dbReference type="BMRB" id="P32917"/>
<dbReference type="SMR" id="P32917"/>
<dbReference type="BioGRID" id="32160">
    <property type="interactions" value="70"/>
</dbReference>
<dbReference type="DIP" id="DIP-858N"/>
<dbReference type="FunCoup" id="P32917">
    <property type="interactions" value="147"/>
</dbReference>
<dbReference type="IntAct" id="P32917">
    <property type="interactions" value="20"/>
</dbReference>
<dbReference type="MINT" id="P32917"/>
<dbReference type="STRING" id="4932.YDR103W"/>
<dbReference type="iPTMnet" id="P32917"/>
<dbReference type="PaxDb" id="4932-YDR103W"/>
<dbReference type="PeptideAtlas" id="P32917"/>
<dbReference type="EnsemblFungi" id="YDR103W_mRNA">
    <property type="protein sequence ID" value="YDR103W"/>
    <property type="gene ID" value="YDR103W"/>
</dbReference>
<dbReference type="GeneID" id="851680"/>
<dbReference type="KEGG" id="sce:YDR103W"/>
<dbReference type="AGR" id="SGD:S000002510"/>
<dbReference type="SGD" id="S000002510">
    <property type="gene designation" value="STE5"/>
</dbReference>
<dbReference type="VEuPathDB" id="FungiDB:YDR103W"/>
<dbReference type="eggNOG" id="ENOG502QQID">
    <property type="taxonomic scope" value="Eukaryota"/>
</dbReference>
<dbReference type="HOGENOM" id="CLU_013813_0_0_1"/>
<dbReference type="InParanoid" id="P32917"/>
<dbReference type="OMA" id="SHQECLI"/>
<dbReference type="OrthoDB" id="299997at2759"/>
<dbReference type="BioCyc" id="YEAST:G3O-29705-MONOMER"/>
<dbReference type="BioGRID-ORCS" id="851680">
    <property type="hits" value="3 hits in 10 CRISPR screens"/>
</dbReference>
<dbReference type="EvolutionaryTrace" id="P32917"/>
<dbReference type="PRO" id="PR:P32917"/>
<dbReference type="Proteomes" id="UP000002311">
    <property type="component" value="Chromosome IV"/>
</dbReference>
<dbReference type="RNAct" id="P32917">
    <property type="molecule type" value="protein"/>
</dbReference>
<dbReference type="GO" id="GO:0005737">
    <property type="term" value="C:cytoplasm"/>
    <property type="evidence" value="ECO:0000314"/>
    <property type="project" value="SGD"/>
</dbReference>
<dbReference type="GO" id="GO:0043332">
    <property type="term" value="C:mating projection tip"/>
    <property type="evidence" value="ECO:0000314"/>
    <property type="project" value="SGD"/>
</dbReference>
<dbReference type="GO" id="GO:0070867">
    <property type="term" value="C:mating projection tip membrane"/>
    <property type="evidence" value="ECO:0000314"/>
    <property type="project" value="SGD"/>
</dbReference>
<dbReference type="GO" id="GO:0005634">
    <property type="term" value="C:nucleus"/>
    <property type="evidence" value="ECO:0000314"/>
    <property type="project" value="SGD"/>
</dbReference>
<dbReference type="GO" id="GO:0005886">
    <property type="term" value="C:plasma membrane"/>
    <property type="evidence" value="ECO:0000315"/>
    <property type="project" value="SGD"/>
</dbReference>
<dbReference type="GO" id="GO:0031681">
    <property type="term" value="F:G-protein beta-subunit binding"/>
    <property type="evidence" value="ECO:0000353"/>
    <property type="project" value="SGD"/>
</dbReference>
<dbReference type="GO" id="GO:0019900">
    <property type="term" value="F:kinase binding"/>
    <property type="evidence" value="ECO:0007669"/>
    <property type="project" value="InterPro"/>
</dbReference>
<dbReference type="GO" id="GO:0005078">
    <property type="term" value="F:MAP-kinase scaffold activity"/>
    <property type="evidence" value="ECO:0000314"/>
    <property type="project" value="SGD"/>
</dbReference>
<dbReference type="GO" id="GO:0005546">
    <property type="term" value="F:phosphatidylinositol-4,5-bisphosphate binding"/>
    <property type="evidence" value="ECO:0000314"/>
    <property type="project" value="SGD"/>
</dbReference>
<dbReference type="GO" id="GO:0001403">
    <property type="term" value="P:invasive growth in response to glucose limitation"/>
    <property type="evidence" value="ECO:0000315"/>
    <property type="project" value="SGD"/>
</dbReference>
<dbReference type="GO" id="GO:0043409">
    <property type="term" value="P:negative regulation of MAPK cascade"/>
    <property type="evidence" value="ECO:0000315"/>
    <property type="project" value="SGD"/>
</dbReference>
<dbReference type="GO" id="GO:0000750">
    <property type="term" value="P:pheromone-dependent signal transduction involved in conjugation with cellular fusion"/>
    <property type="evidence" value="ECO:0000314"/>
    <property type="project" value="SGD"/>
</dbReference>
<dbReference type="DisProt" id="DP01511"/>
<dbReference type="Gene3D" id="3.40.50.11070">
    <property type="entry name" value="Protein Ste5, Fus3-binding domain"/>
    <property type="match status" value="1"/>
</dbReference>
<dbReference type="InterPro" id="IPR038382">
    <property type="entry name" value="Ste5_C_sf"/>
</dbReference>
<dbReference type="InterPro" id="IPR021651">
    <property type="entry name" value="Ste5_Fus-binding"/>
</dbReference>
<dbReference type="InterPro" id="IPR021106">
    <property type="entry name" value="Ste5_Fus3-bd_dom"/>
</dbReference>
<dbReference type="Pfam" id="PF11610">
    <property type="entry name" value="Ste5"/>
    <property type="match status" value="1"/>
</dbReference>
<dbReference type="Pfam" id="PF12194">
    <property type="entry name" value="Ste5_C"/>
    <property type="match status" value="1"/>
</dbReference>
<sequence>MMETPTDNIVSPFHNFGSSTQYSGTLSRTPNQIIELEKPSTLSPLSRGKKWTEKLARFQRSSAKKKRFSPSPISSSTFSFSPKSRVTSSNSSGNEDGNLMNTPSTVSTDYLPQHPHRTSSLPRPNSNLFHASNSNLSRANEPPRAENLSDNIPPKVAPFGYPIQRTSIKKSFLNASCTLCDEPISNRRKGEKIIELACGHLSHQECLIISFGTTSKADVRALFPFCTKCKKDTNKAVQCIPENDELKDILISDFLIHKIPDSELSITPQSRFPPYSPLLPPFGLSYTPVERQTIYSQAPSLNPNLILAAPPKERNQIPQKKSNYTFLHSPLGHRRIPSGANSILADTSVALSANDSISAVSNSVRAKDDETKTTLPLLRSYFIQILLNNFQEELQDWRIDGDYGLLRLVDKLMISKDGQRYIQCWCFLFEDAFVIAEVDNDVDVLEIRLKNLEVFTPIANLRMTTLEASVLKCTLNKQHCADLSDLYIVQNINSDESTTVQKWISGILNQDFVFNEDNITSTLPILPIIKNFSKDVGNGRHETSTFLGLINPNKVVEVGNVHDNDTVIIRRGFTLNSGECSRQSTVDSIQSVLTTISSILSLKREKPDNLAIILQIDFTKLKEEDSLIVVYNSLKALTIKFARLQFCFVDRNNYVLDYGSVLHKIDSLDSISNLKSKSSSTQFSPIWLKNTLYPENIHEHLGIVAVSNSNMEAKKSILFQDYRCFTSFGRRRPNELKIKVGYLNVDYSDKIDELVEASSWTFVLETLCYSFGLSFDEHDDDDEEDNDDSTDNELDNSSGSLSDAESTTTIHIDSPFDNENATANMVNDRNLLTEGEHSNIENLETVASSVQPALIPNIRFSLHSEEEGTNENENENDMPVLLLSDMDKGIDGITRRSSFSSLIESGNNNCPLHMDYI</sequence>
<gene>
    <name type="primary">STE5</name>
    <name type="synonym">NUL3</name>
    <name type="ordered locus">YDR103W</name>
    <name type="ORF">YD8557.12</name>
</gene>
<proteinExistence type="evidence at protein level"/>
<protein>
    <recommendedName>
        <fullName>Protein STE5</fullName>
    </recommendedName>
</protein>
<reference key="1">
    <citation type="journal article" date="1993" name="Mol. Cell. Biol.">
        <title>Function of the ste signal transduction pathway for mating pheromones sustains MAT alpha 1 transcription in Saccharomyces cerevisiae.</title>
        <authorList>
            <person name="Mukai Y."/>
            <person name="Harashima S."/>
            <person name="Oshima Y."/>
        </authorList>
    </citation>
    <scope>NUCLEOTIDE SEQUENCE [GENOMIC DNA]</scope>
</reference>
<reference key="2">
    <citation type="journal article" date="1993" name="Proc. Natl. Acad. Sci. U.S.A.">
        <title>Cloning of the STE5 gene of Saccharomyces cerevisiae as a suppressor of the mating defect of cdc25 temperature-sensitive mutants.</title>
        <authorList>
            <person name="Perlman R."/>
            <person name="Yablonski D."/>
            <person name="Simchen G."/>
            <person name="Levitzki A."/>
        </authorList>
    </citation>
    <scope>NUCLEOTIDE SEQUENCE [GENOMIC DNA]</scope>
</reference>
<reference key="3">
    <citation type="submission" date="1993-09" db="EMBL/GenBank/DDBJ databases">
        <title>Sequence and characterization of the STE5 gene required for signal transduction and mating in Saccharomyces cerevisiae.</title>
        <authorList>
            <person name="Mackay V.L."/>
            <person name="Mathewes S."/>
            <person name="Bell L."/>
            <person name="O'Hara P.J."/>
        </authorList>
    </citation>
    <scope>NUCLEOTIDE SEQUENCE</scope>
</reference>
<reference key="4">
    <citation type="journal article" date="1993" name="Mol. Gen. Genet.">
        <title>Cloning of Saccharomyces cerevisiae STE5 as a suppressor of a Ste20 protein kinase mutant: structural and functional similarity of Ste5 to Far1.</title>
        <authorList>
            <person name="Leberer E."/>
            <person name="Dignard D."/>
            <person name="Harcus D."/>
            <person name="Hougan L."/>
            <person name="Whiteway M."/>
            <person name="Thomas D.Y."/>
        </authorList>
    </citation>
    <scope>NUCLEOTIDE SEQUENCE [GENOMIC DNA]</scope>
    <source>
        <strain>DBY939</strain>
    </source>
</reference>
<reference key="5">
    <citation type="journal article" date="1997" name="Nature">
        <title>The nucleotide sequence of Saccharomyces cerevisiae chromosome IV.</title>
        <authorList>
            <person name="Jacq C."/>
            <person name="Alt-Moerbe J."/>
            <person name="Andre B."/>
            <person name="Arnold W."/>
            <person name="Bahr A."/>
            <person name="Ballesta J.P.G."/>
            <person name="Bargues M."/>
            <person name="Baron L."/>
            <person name="Becker A."/>
            <person name="Biteau N."/>
            <person name="Bloecker H."/>
            <person name="Blugeon C."/>
            <person name="Boskovic J."/>
            <person name="Brandt P."/>
            <person name="Brueckner M."/>
            <person name="Buitrago M.J."/>
            <person name="Coster F."/>
            <person name="Delaveau T."/>
            <person name="del Rey F."/>
            <person name="Dujon B."/>
            <person name="Eide L.G."/>
            <person name="Garcia-Cantalejo J.M."/>
            <person name="Goffeau A."/>
            <person name="Gomez-Peris A."/>
            <person name="Granotier C."/>
            <person name="Hanemann V."/>
            <person name="Hankeln T."/>
            <person name="Hoheisel J.D."/>
            <person name="Jaeger W."/>
            <person name="Jimenez A."/>
            <person name="Jonniaux J.-L."/>
            <person name="Kraemer C."/>
            <person name="Kuester H."/>
            <person name="Laamanen P."/>
            <person name="Legros Y."/>
            <person name="Louis E.J."/>
            <person name="Moeller-Rieker S."/>
            <person name="Monnet A."/>
            <person name="Moro M."/>
            <person name="Mueller-Auer S."/>
            <person name="Nussbaumer B."/>
            <person name="Paricio N."/>
            <person name="Paulin L."/>
            <person name="Perea J."/>
            <person name="Perez-Alonso M."/>
            <person name="Perez-Ortin J.E."/>
            <person name="Pohl T.M."/>
            <person name="Prydz H."/>
            <person name="Purnelle B."/>
            <person name="Rasmussen S.W."/>
            <person name="Remacha M.A."/>
            <person name="Revuelta J.L."/>
            <person name="Rieger M."/>
            <person name="Salom D."/>
            <person name="Saluz H.P."/>
            <person name="Saiz J.E."/>
            <person name="Saren A.-M."/>
            <person name="Schaefer M."/>
            <person name="Scharfe M."/>
            <person name="Schmidt E.R."/>
            <person name="Schneider C."/>
            <person name="Scholler P."/>
            <person name="Schwarz S."/>
            <person name="Soler-Mira A."/>
            <person name="Urrestarazu L.A."/>
            <person name="Verhasselt P."/>
            <person name="Vissers S."/>
            <person name="Voet M."/>
            <person name="Volckaert G."/>
            <person name="Wagner G."/>
            <person name="Wambutt R."/>
            <person name="Wedler E."/>
            <person name="Wedler H."/>
            <person name="Woelfl S."/>
            <person name="Harris D.E."/>
            <person name="Bowman S."/>
            <person name="Brown D."/>
            <person name="Churcher C.M."/>
            <person name="Connor R."/>
            <person name="Dedman K."/>
            <person name="Gentles S."/>
            <person name="Hamlin N."/>
            <person name="Hunt S."/>
            <person name="Jones L."/>
            <person name="McDonald S."/>
            <person name="Murphy L.D."/>
            <person name="Niblett D."/>
            <person name="Odell C."/>
            <person name="Oliver K."/>
            <person name="Rajandream M.A."/>
            <person name="Richards C."/>
            <person name="Shore L."/>
            <person name="Walsh S.V."/>
            <person name="Barrell B.G."/>
            <person name="Dietrich F.S."/>
            <person name="Mulligan J.T."/>
            <person name="Allen E."/>
            <person name="Araujo R."/>
            <person name="Aviles E."/>
            <person name="Berno A."/>
            <person name="Carpenter J."/>
            <person name="Chen E."/>
            <person name="Cherry J.M."/>
            <person name="Chung E."/>
            <person name="Duncan M."/>
            <person name="Hunicke-Smith S."/>
            <person name="Hyman R.W."/>
            <person name="Komp C."/>
            <person name="Lashkari D."/>
            <person name="Lew H."/>
            <person name="Lin D."/>
            <person name="Mosedale D."/>
            <person name="Nakahara K."/>
            <person name="Namath A."/>
            <person name="Oefner P."/>
            <person name="Oh C."/>
            <person name="Petel F.X."/>
            <person name="Roberts D."/>
            <person name="Schramm S."/>
            <person name="Schroeder M."/>
            <person name="Shogren T."/>
            <person name="Shroff N."/>
            <person name="Winant A."/>
            <person name="Yelton M.A."/>
            <person name="Botstein D."/>
            <person name="Davis R.W."/>
            <person name="Johnston M."/>
            <person name="Andrews S."/>
            <person name="Brinkman R."/>
            <person name="Cooper J."/>
            <person name="Ding H."/>
            <person name="Du Z."/>
            <person name="Favello A."/>
            <person name="Fulton L."/>
            <person name="Gattung S."/>
            <person name="Greco T."/>
            <person name="Hallsworth K."/>
            <person name="Hawkins J."/>
            <person name="Hillier L.W."/>
            <person name="Jier M."/>
            <person name="Johnson D."/>
            <person name="Johnston L."/>
            <person name="Kirsten J."/>
            <person name="Kucaba T."/>
            <person name="Langston Y."/>
            <person name="Latreille P."/>
            <person name="Le T."/>
            <person name="Mardis E."/>
            <person name="Menezes S."/>
            <person name="Miller N."/>
            <person name="Nhan M."/>
            <person name="Pauley A."/>
            <person name="Peluso D."/>
            <person name="Rifkin L."/>
            <person name="Riles L."/>
            <person name="Taich A."/>
            <person name="Trevaskis E."/>
            <person name="Vignati D."/>
            <person name="Wilcox L."/>
            <person name="Wohldman P."/>
            <person name="Vaudin M."/>
            <person name="Wilson R."/>
            <person name="Waterston R."/>
            <person name="Albermann K."/>
            <person name="Hani J."/>
            <person name="Heumann K."/>
            <person name="Kleine K."/>
            <person name="Mewes H.-W."/>
            <person name="Zollner A."/>
            <person name="Zaccaria P."/>
        </authorList>
    </citation>
    <scope>NUCLEOTIDE SEQUENCE [LARGE SCALE GENOMIC DNA]</scope>
    <source>
        <strain>ATCC 204508 / S288c</strain>
    </source>
</reference>
<reference key="6">
    <citation type="journal article" date="2014" name="G3 (Bethesda)">
        <title>The reference genome sequence of Saccharomyces cerevisiae: Then and now.</title>
        <authorList>
            <person name="Engel S.R."/>
            <person name="Dietrich F.S."/>
            <person name="Fisk D.G."/>
            <person name="Binkley G."/>
            <person name="Balakrishnan R."/>
            <person name="Costanzo M.C."/>
            <person name="Dwight S.S."/>
            <person name="Hitz B.C."/>
            <person name="Karra K."/>
            <person name="Nash R.S."/>
            <person name="Weng S."/>
            <person name="Wong E.D."/>
            <person name="Lloyd P."/>
            <person name="Skrzypek M.S."/>
            <person name="Miyasato S.R."/>
            <person name="Simison M."/>
            <person name="Cherry J.M."/>
        </authorList>
    </citation>
    <scope>GENOME REANNOTATION</scope>
    <source>
        <strain>ATCC 204508 / S288c</strain>
    </source>
</reference>
<reference key="7">
    <citation type="journal article" date="2003" name="Nature">
        <title>Global analysis of protein expression in yeast.</title>
        <authorList>
            <person name="Ghaemmaghami S."/>
            <person name="Huh W.-K."/>
            <person name="Bower K."/>
            <person name="Howson R.W."/>
            <person name="Belle A."/>
            <person name="Dephoure N."/>
            <person name="O'Shea E.K."/>
            <person name="Weissman J.S."/>
        </authorList>
    </citation>
    <scope>LEVEL OF PROTEIN EXPRESSION [LARGE SCALE ANALYSIS]</scope>
</reference>
<reference key="8">
    <citation type="journal article" date="2007" name="J. Proteome Res.">
        <title>Large-scale phosphorylation analysis of alpha-factor-arrested Saccharomyces cerevisiae.</title>
        <authorList>
            <person name="Li X."/>
            <person name="Gerber S.A."/>
            <person name="Rudner A.D."/>
            <person name="Beausoleil S.A."/>
            <person name="Haas W."/>
            <person name="Villen J."/>
            <person name="Elias J.E."/>
            <person name="Gygi S.P."/>
        </authorList>
    </citation>
    <scope>PHOSPHORYLATION [LARGE SCALE ANALYSIS] AT SER-329</scope>
    <scope>IDENTIFICATION BY MASS SPECTROMETRY [LARGE SCALE ANALYSIS]</scope>
    <source>
        <strain>ADR376</strain>
    </source>
</reference>
<reference key="9">
    <citation type="journal article" date="2008" name="Mol. Cell. Proteomics">
        <title>A multidimensional chromatography technology for in-depth phosphoproteome analysis.</title>
        <authorList>
            <person name="Albuquerque C.P."/>
            <person name="Smolka M.B."/>
            <person name="Payne S.H."/>
            <person name="Bafna V."/>
            <person name="Eng J."/>
            <person name="Zhou H."/>
        </authorList>
    </citation>
    <scope>IDENTIFICATION BY MASS SPECTROMETRY [LARGE SCALE ANALYSIS]</scope>
</reference>
<reference key="10">
    <citation type="journal article" date="2009" name="Science">
        <title>Global analysis of Cdk1 substrate phosphorylation sites provides insights into evolution.</title>
        <authorList>
            <person name="Holt L.J."/>
            <person name="Tuch B.B."/>
            <person name="Villen J."/>
            <person name="Johnson A.D."/>
            <person name="Gygi S.P."/>
            <person name="Morgan D.O."/>
        </authorList>
    </citation>
    <scope>IDENTIFICATION BY MASS SPECTROMETRY [LARGE SCALE ANALYSIS]</scope>
</reference>